<keyword id="KW-0067">ATP-binding</keyword>
<keyword id="KW-0963">Cytoplasm</keyword>
<keyword id="KW-0256">Endoplasmic reticulum</keyword>
<keyword id="KW-0333">Golgi apparatus</keyword>
<keyword id="KW-0472">Membrane</keyword>
<keyword id="KW-0479">Metal-binding</keyword>
<keyword id="KW-0547">Nucleotide-binding</keyword>
<keyword id="KW-0539">Nucleus</keyword>
<keyword id="KW-0597">Phosphoprotein</keyword>
<keyword id="KW-1185">Reference proteome</keyword>
<keyword id="KW-0833">Ubl conjugation pathway</keyword>
<keyword id="KW-0862">Zinc</keyword>
<organism>
    <name type="scientific">Rattus norvegicus</name>
    <name type="common">Rat</name>
    <dbReference type="NCBI Taxonomy" id="10116"/>
    <lineage>
        <taxon>Eukaryota</taxon>
        <taxon>Metazoa</taxon>
        <taxon>Chordata</taxon>
        <taxon>Craniata</taxon>
        <taxon>Vertebrata</taxon>
        <taxon>Euteleostomi</taxon>
        <taxon>Mammalia</taxon>
        <taxon>Eutheria</taxon>
        <taxon>Euarchontoglires</taxon>
        <taxon>Glires</taxon>
        <taxon>Rodentia</taxon>
        <taxon>Myomorpha</taxon>
        <taxon>Muroidea</taxon>
        <taxon>Muridae</taxon>
        <taxon>Murinae</taxon>
        <taxon>Rattus</taxon>
    </lineage>
</organism>
<sequence>MAESVERLLQRVEELEQELARERSRRIAGDGHCGRTRIQKMSDEVVDSNPYSRLMALKRMGVVSDYEKIRTYAVAIVGVGGVGSVTAEMLTRCGIGKLLLFDYDKVELANMNRLFFQPYQAGMSKVQAAEHTLRSINPDVLFEVHNYNITTVEHFEHFMNRISNGGLEEGQPVDLVLSCVDNFEARMAINTACNELGQTWMESGVSENAVSGHIQLMVPGESACFACAPPLVVASNIDEKTLKREGVCAASLPTTMGVVAGILVQNVLKFLLKFGTVSFYLGYNAMQDFFPTMFMKPNPQCDDKNCRKQQEEYKKRAPAQPTQETAPQEEEEVVHEDNEWGIELVSEVSEEELKNSSGPVPTLPEGITVAYTVPKKREDSVSEVTVEDSGESLEDLMARMKKM</sequence>
<reference key="1">
    <citation type="journal article" date="2004" name="Genome Res.">
        <title>The status, quality, and expansion of the NIH full-length cDNA project: the Mammalian Gene Collection (MGC).</title>
        <authorList>
            <consortium name="The MGC Project Team"/>
        </authorList>
    </citation>
    <scope>NUCLEOTIDE SEQUENCE [LARGE SCALE MRNA]</scope>
    <source>
        <tissue>Ovary</tissue>
    </source>
</reference>
<reference key="2">
    <citation type="journal article" date="2012" name="Nat. Commun.">
        <title>Quantitative maps of protein phosphorylation sites across 14 different rat organs and tissues.</title>
        <authorList>
            <person name="Lundby A."/>
            <person name="Secher A."/>
            <person name="Lage K."/>
            <person name="Nordsborg N.B."/>
            <person name="Dmytriyev A."/>
            <person name="Lundby C."/>
            <person name="Olsen J.V."/>
        </authorList>
    </citation>
    <scope>IDENTIFICATION BY MASS SPECTROMETRY [LARGE SCALE ANALYSIS]</scope>
</reference>
<accession>Q5M7A4</accession>
<feature type="chain" id="PRO_0000194973" description="Ubiquitin-like modifier-activating enzyme 5">
    <location>
        <begin position="1"/>
        <end position="403"/>
    </location>
</feature>
<feature type="region of interest" description="Disordered" evidence="3">
    <location>
        <begin position="306"/>
        <end position="337"/>
    </location>
</feature>
<feature type="region of interest" description="Linker" evidence="2">
    <location>
        <begin position="346"/>
        <end position="376"/>
    </location>
</feature>
<feature type="short sequence motif" description="UFM1-interacting sequence (UIS)" evidence="2">
    <location>
        <begin position="333"/>
        <end position="345"/>
    </location>
</feature>
<feature type="short sequence motif" description="UFC1-binding sequence (UFC)" evidence="2">
    <location>
        <begin position="388"/>
        <end position="403"/>
    </location>
</feature>
<feature type="compositionally biased region" description="Basic and acidic residues" evidence="3">
    <location>
        <begin position="306"/>
        <end position="315"/>
    </location>
</feature>
<feature type="active site" description="Glycyl thioester intermediate" evidence="2">
    <location>
        <position position="248"/>
    </location>
</feature>
<feature type="binding site" evidence="2">
    <location>
        <position position="81"/>
    </location>
    <ligand>
        <name>ATP</name>
        <dbReference type="ChEBI" id="CHEBI:30616"/>
    </ligand>
</feature>
<feature type="binding site" evidence="2">
    <location>
        <position position="102"/>
    </location>
    <ligand>
        <name>ATP</name>
        <dbReference type="ChEBI" id="CHEBI:30616"/>
    </ligand>
</feature>
<feature type="binding site" evidence="2">
    <location>
        <position position="125"/>
    </location>
    <ligand>
        <name>ATP</name>
        <dbReference type="ChEBI" id="CHEBI:30616"/>
    </ligand>
</feature>
<feature type="binding site" evidence="2">
    <location>
        <position position="148"/>
    </location>
    <ligand>
        <name>ATP</name>
        <dbReference type="ChEBI" id="CHEBI:30616"/>
    </ligand>
</feature>
<feature type="binding site" evidence="2">
    <location>
        <position position="182"/>
    </location>
    <ligand>
        <name>ATP</name>
        <dbReference type="ChEBI" id="CHEBI:30616"/>
    </ligand>
</feature>
<feature type="binding site" evidence="2">
    <location>
        <position position="224"/>
    </location>
    <ligand>
        <name>Zn(2+)</name>
        <dbReference type="ChEBI" id="CHEBI:29105"/>
    </ligand>
</feature>
<feature type="binding site" evidence="2">
    <location>
        <position position="227"/>
    </location>
    <ligand>
        <name>Zn(2+)</name>
        <dbReference type="ChEBI" id="CHEBI:29105"/>
    </ligand>
</feature>
<feature type="binding site" evidence="2">
    <location>
        <position position="301"/>
    </location>
    <ligand>
        <name>Zn(2+)</name>
        <dbReference type="ChEBI" id="CHEBI:29105"/>
    </ligand>
</feature>
<feature type="binding site" evidence="2">
    <location>
        <position position="306"/>
    </location>
    <ligand>
        <name>Zn(2+)</name>
        <dbReference type="ChEBI" id="CHEBI:29105"/>
    </ligand>
</feature>
<feature type="modified residue" description="Phosphoserine" evidence="2">
    <location>
        <position position="357"/>
    </location>
</feature>
<feature type="modified residue" description="Phosphoserine" evidence="1">
    <location>
        <position position="392"/>
    </location>
</feature>
<evidence type="ECO:0000250" key="1">
    <source>
        <dbReference type="UniProtKB" id="Q8VE47"/>
    </source>
</evidence>
<evidence type="ECO:0000250" key="2">
    <source>
        <dbReference type="UniProtKB" id="Q9GZZ9"/>
    </source>
</evidence>
<evidence type="ECO:0000256" key="3">
    <source>
        <dbReference type="SAM" id="MobiDB-lite"/>
    </source>
</evidence>
<evidence type="ECO:0000305" key="4"/>
<evidence type="ECO:0000312" key="5">
    <source>
        <dbReference type="RGD" id="1311702"/>
    </source>
</evidence>
<proteinExistence type="evidence at protein level"/>
<protein>
    <recommendedName>
        <fullName evidence="4">Ubiquitin-like modifier-activating enzyme 5</fullName>
        <shortName evidence="2">Ubiquitin-activating enzyme 5</shortName>
    </recommendedName>
    <alternativeName>
        <fullName evidence="4">UFM1-activating enzyme</fullName>
    </alternativeName>
</protein>
<gene>
    <name evidence="5" type="primary">Uba5</name>
</gene>
<name>UBA5_RAT</name>
<comment type="function">
    <text evidence="1 2">E1-like enzyme which specifically catalyzes the first step in ufmylation. Activates UFM1 by first adenylating its C-terminal glycine residue with ATP, and thereafter linking this residue to the side chain of a cysteine residue in E1, yielding a UFM1-E1 thioester and free AMP. Activates UFM1 via a trans-binding mechanism, in which UFM1 interacts with distinct sites in both subunits of the UBA5 homodimer. Trans-binding also promotes stabilization of the UBA5 homodimer, and enhances ATP-binding. Transfer of UFM1 from UBA5 to the E2-like enzyme UFC1 also takes place using a trans mechanism. Ufmylation plays a key role in various processes, such as ribosome recycling, response to DNA damage, interferon response or reticulophagy (also called ER-phagy) (By similarity). Ufmylation is essential for erythroid differentiation of both megakaryocytes and erythrocytes (By similarity).</text>
</comment>
<comment type="subunit">
    <text evidence="2">Homodimer; homodimerization is required for UFM1 activation. Interacts (via UIS motif) with UFM1; binds UFM1 via a trans-binding mechanism in which UFM1 interacts with distinct sites in both subunits of the UBA5 homodimer. Interacts (via C-terminus) with UFC1. Interacts (via UIS motif) with GABARAPL2 and, with lower affinity, with GABARAP and GABARAPL1.</text>
</comment>
<comment type="subcellular location">
    <subcellularLocation>
        <location evidence="2">Cytoplasm</location>
    </subcellularLocation>
    <subcellularLocation>
        <location evidence="2">Nucleus</location>
    </subcellularLocation>
    <subcellularLocation>
        <location evidence="2">Endoplasmic reticulum membrane</location>
    </subcellularLocation>
    <subcellularLocation>
        <location evidence="2">Golgi apparatus</location>
    </subcellularLocation>
    <text evidence="2">Localizes mainly in the cytoplasm, while it localizes to the nucleus in presence of SUMO2. Interaction with GABARAPL2 promotes localization to the endoplasmic reticulum membrane.</text>
</comment>
<comment type="domain">
    <text evidence="2">The UFC1-binding sequence (UFC) motif mediates interaction with UFC1.</text>
</comment>
<comment type="domain">
    <text evidence="2">The linker region is required to activate the active site of UFC1: it region moves next to active site of UFC1 to reduce the amount of water molecules in the vicinity of UFC1's active site and thereby elevate the nucleophilic activity of UFC1 active site.</text>
</comment>
<comment type="domain">
    <text evidence="2">The UFM1-interacting sequence (UIS) motif mediates interaction with both UFM1 and LC3/GABARAP proteins (GABARAP, GABARAPL1 and GABARAPL2).</text>
</comment>
<comment type="similarity">
    <text evidence="4">Belongs to the ubiquitin-activating E1 family. UBA5 subfamily.</text>
</comment>
<dbReference type="EMBL" id="BC088757">
    <property type="protein sequence ID" value="AAH88757.1"/>
    <property type="molecule type" value="mRNA"/>
</dbReference>
<dbReference type="RefSeq" id="NP_001009669.1">
    <property type="nucleotide sequence ID" value="NM_001009669.2"/>
</dbReference>
<dbReference type="SMR" id="Q5M7A4"/>
<dbReference type="FunCoup" id="Q5M7A4">
    <property type="interactions" value="3749"/>
</dbReference>
<dbReference type="STRING" id="10116.ENSRNOP00000015240"/>
<dbReference type="iPTMnet" id="Q5M7A4"/>
<dbReference type="PhosphoSitePlus" id="Q5M7A4"/>
<dbReference type="jPOST" id="Q5M7A4"/>
<dbReference type="PaxDb" id="10116-ENSRNOP00000015240"/>
<dbReference type="Ensembl" id="ENSRNOT00000015240.6">
    <property type="protein sequence ID" value="ENSRNOP00000015240.3"/>
    <property type="gene ID" value="ENSRNOG00000011027.6"/>
</dbReference>
<dbReference type="GeneID" id="300968"/>
<dbReference type="KEGG" id="rno:300968"/>
<dbReference type="UCSC" id="RGD:1311702">
    <property type="organism name" value="rat"/>
</dbReference>
<dbReference type="AGR" id="RGD:1311702"/>
<dbReference type="CTD" id="79876"/>
<dbReference type="RGD" id="1311702">
    <property type="gene designation" value="Uba5"/>
</dbReference>
<dbReference type="eggNOG" id="KOG2336">
    <property type="taxonomic scope" value="Eukaryota"/>
</dbReference>
<dbReference type="GeneTree" id="ENSGT00940000156177"/>
<dbReference type="HOGENOM" id="CLU_013325_0_1_1"/>
<dbReference type="InParanoid" id="Q5M7A4"/>
<dbReference type="OMA" id="MNIVKDY"/>
<dbReference type="OrthoDB" id="206053at2759"/>
<dbReference type="PhylomeDB" id="Q5M7A4"/>
<dbReference type="TreeFam" id="TF314168"/>
<dbReference type="Reactome" id="R-RNO-983168">
    <property type="pathway name" value="Antigen processing: Ubiquitination &amp; Proteasome degradation"/>
</dbReference>
<dbReference type="PRO" id="PR:Q5M7A4"/>
<dbReference type="Proteomes" id="UP000002494">
    <property type="component" value="Chromosome 8"/>
</dbReference>
<dbReference type="Bgee" id="ENSRNOG00000011027">
    <property type="expression patterns" value="Expressed in pancreas and 20 other cell types or tissues"/>
</dbReference>
<dbReference type="GO" id="GO:0005737">
    <property type="term" value="C:cytoplasm"/>
    <property type="evidence" value="ECO:0000250"/>
    <property type="project" value="UniProtKB"/>
</dbReference>
<dbReference type="GO" id="GO:0005829">
    <property type="term" value="C:cytosol"/>
    <property type="evidence" value="ECO:0000318"/>
    <property type="project" value="GO_Central"/>
</dbReference>
<dbReference type="GO" id="GO:0005789">
    <property type="term" value="C:endoplasmic reticulum membrane"/>
    <property type="evidence" value="ECO:0000250"/>
    <property type="project" value="UniProtKB"/>
</dbReference>
<dbReference type="GO" id="GO:0005794">
    <property type="term" value="C:Golgi apparatus"/>
    <property type="evidence" value="ECO:0007669"/>
    <property type="project" value="UniProtKB-SubCell"/>
</dbReference>
<dbReference type="GO" id="GO:0005634">
    <property type="term" value="C:nucleus"/>
    <property type="evidence" value="ECO:0007669"/>
    <property type="project" value="UniProtKB-SubCell"/>
</dbReference>
<dbReference type="GO" id="GO:0005524">
    <property type="term" value="F:ATP binding"/>
    <property type="evidence" value="ECO:0007669"/>
    <property type="project" value="UniProtKB-KW"/>
</dbReference>
<dbReference type="GO" id="GO:0042803">
    <property type="term" value="F:protein homodimerization activity"/>
    <property type="evidence" value="ECO:0000250"/>
    <property type="project" value="UniProtKB"/>
</dbReference>
<dbReference type="GO" id="GO:0071566">
    <property type="term" value="F:UFM1 activating enzyme activity"/>
    <property type="evidence" value="ECO:0000250"/>
    <property type="project" value="UniProtKB"/>
</dbReference>
<dbReference type="GO" id="GO:0008270">
    <property type="term" value="F:zinc ion binding"/>
    <property type="evidence" value="ECO:0000250"/>
    <property type="project" value="UniProtKB"/>
</dbReference>
<dbReference type="GO" id="GO:0030218">
    <property type="term" value="P:erythrocyte differentiation"/>
    <property type="evidence" value="ECO:0000250"/>
    <property type="project" value="UniProtKB"/>
</dbReference>
<dbReference type="GO" id="GO:0030219">
    <property type="term" value="P:megakaryocyte differentiation"/>
    <property type="evidence" value="ECO:0000250"/>
    <property type="project" value="UniProtKB"/>
</dbReference>
<dbReference type="GO" id="GO:0050905">
    <property type="term" value="P:neuromuscular process"/>
    <property type="evidence" value="ECO:0000266"/>
    <property type="project" value="RGD"/>
</dbReference>
<dbReference type="GO" id="GO:1990592">
    <property type="term" value="P:protein K69-linked ufmylation"/>
    <property type="evidence" value="ECO:0000250"/>
    <property type="project" value="UniProtKB"/>
</dbReference>
<dbReference type="GO" id="GO:0071569">
    <property type="term" value="P:protein ufmylation"/>
    <property type="evidence" value="ECO:0000250"/>
    <property type="project" value="UniProtKB"/>
</dbReference>
<dbReference type="GO" id="GO:0033146">
    <property type="term" value="P:regulation of intracellular estrogen receptor signaling pathway"/>
    <property type="evidence" value="ECO:0000250"/>
    <property type="project" value="UniProtKB"/>
</dbReference>
<dbReference type="GO" id="GO:0032649">
    <property type="term" value="P:regulation of type II interferon production"/>
    <property type="evidence" value="ECO:0000266"/>
    <property type="project" value="RGD"/>
</dbReference>
<dbReference type="GO" id="GO:0034976">
    <property type="term" value="P:response to endoplasmic reticulum stress"/>
    <property type="evidence" value="ECO:0000250"/>
    <property type="project" value="UniProtKB"/>
</dbReference>
<dbReference type="GO" id="GO:0061709">
    <property type="term" value="P:reticulophagy"/>
    <property type="evidence" value="ECO:0000250"/>
    <property type="project" value="UniProtKB"/>
</dbReference>
<dbReference type="CDD" id="cd00757">
    <property type="entry name" value="ThiF_MoeB_HesA_family"/>
    <property type="match status" value="1"/>
</dbReference>
<dbReference type="FunFam" id="3.40.50.720:FF:000066">
    <property type="entry name" value="Putative ubiquitin-like modifier-activating enzyme 5"/>
    <property type="match status" value="1"/>
</dbReference>
<dbReference type="Gene3D" id="3.40.50.720">
    <property type="entry name" value="NAD(P)-binding Rossmann-like Domain"/>
    <property type="match status" value="1"/>
</dbReference>
<dbReference type="InterPro" id="IPR029752">
    <property type="entry name" value="D-isomer_DH_CS1"/>
</dbReference>
<dbReference type="InterPro" id="IPR045886">
    <property type="entry name" value="ThiF/MoeB/HesA"/>
</dbReference>
<dbReference type="InterPro" id="IPR000594">
    <property type="entry name" value="ThiF_NAD_FAD-bd"/>
</dbReference>
<dbReference type="InterPro" id="IPR035985">
    <property type="entry name" value="Ubiquitin-activating_enz"/>
</dbReference>
<dbReference type="PANTHER" id="PTHR10953">
    <property type="entry name" value="UBIQUITIN-ACTIVATING ENZYME E1"/>
    <property type="match status" value="1"/>
</dbReference>
<dbReference type="PANTHER" id="PTHR10953:SF9">
    <property type="entry name" value="UBIQUITIN-LIKE MODIFIER-ACTIVATING ENZYME 5"/>
    <property type="match status" value="1"/>
</dbReference>
<dbReference type="Pfam" id="PF00899">
    <property type="entry name" value="ThiF"/>
    <property type="match status" value="1"/>
</dbReference>
<dbReference type="SUPFAM" id="SSF69572">
    <property type="entry name" value="Activating enzymes of the ubiquitin-like proteins"/>
    <property type="match status" value="1"/>
</dbReference>